<accession>Q2IX92</accession>
<comment type="function">
    <text evidence="1">Binds as a heterodimer with protein bS6 to the central domain of the 16S rRNA, where it helps stabilize the platform of the 30S subunit.</text>
</comment>
<comment type="subunit">
    <text evidence="1">Part of the 30S ribosomal subunit. Forms a tight heterodimer with protein bS6.</text>
</comment>
<comment type="similarity">
    <text evidence="1">Belongs to the bacterial ribosomal protein bS18 family.</text>
</comment>
<feature type="chain" id="PRO_1000003584" description="Small ribosomal subunit protein bS18">
    <location>
        <begin position="1"/>
        <end position="79"/>
    </location>
</feature>
<proteinExistence type="inferred from homology"/>
<keyword id="KW-1185">Reference proteome</keyword>
<keyword id="KW-0687">Ribonucleoprotein</keyword>
<keyword id="KW-0689">Ribosomal protein</keyword>
<keyword id="KW-0694">RNA-binding</keyword>
<keyword id="KW-0699">rRNA-binding</keyword>
<name>RS18_RHOP2</name>
<sequence length="79" mass="9121">MAEAGARRPFFRRRKTCPFTGPNAPKIDYKDSKLLMRYVSERGKIVPSRITAVSAKKQRELARAIKRARFLGLLPYVIR</sequence>
<dbReference type="EMBL" id="CP000250">
    <property type="protein sequence ID" value="ABD07168.1"/>
    <property type="molecule type" value="Genomic_DNA"/>
</dbReference>
<dbReference type="RefSeq" id="WP_011441353.1">
    <property type="nucleotide sequence ID" value="NC_007778.1"/>
</dbReference>
<dbReference type="SMR" id="Q2IX92"/>
<dbReference type="STRING" id="316058.RPB_2463"/>
<dbReference type="KEGG" id="rpb:RPB_2463"/>
<dbReference type="eggNOG" id="COG0238">
    <property type="taxonomic scope" value="Bacteria"/>
</dbReference>
<dbReference type="HOGENOM" id="CLU_148710_2_3_5"/>
<dbReference type="OrthoDB" id="9812008at2"/>
<dbReference type="Proteomes" id="UP000008809">
    <property type="component" value="Chromosome"/>
</dbReference>
<dbReference type="GO" id="GO:0022627">
    <property type="term" value="C:cytosolic small ribosomal subunit"/>
    <property type="evidence" value="ECO:0007669"/>
    <property type="project" value="TreeGrafter"/>
</dbReference>
<dbReference type="GO" id="GO:0070181">
    <property type="term" value="F:small ribosomal subunit rRNA binding"/>
    <property type="evidence" value="ECO:0007669"/>
    <property type="project" value="TreeGrafter"/>
</dbReference>
<dbReference type="GO" id="GO:0003735">
    <property type="term" value="F:structural constituent of ribosome"/>
    <property type="evidence" value="ECO:0007669"/>
    <property type="project" value="InterPro"/>
</dbReference>
<dbReference type="GO" id="GO:0006412">
    <property type="term" value="P:translation"/>
    <property type="evidence" value="ECO:0007669"/>
    <property type="project" value="UniProtKB-UniRule"/>
</dbReference>
<dbReference type="FunFam" id="4.10.640.10:FF:000006">
    <property type="entry name" value="30S ribosomal protein S18"/>
    <property type="match status" value="1"/>
</dbReference>
<dbReference type="Gene3D" id="4.10.640.10">
    <property type="entry name" value="Ribosomal protein S18"/>
    <property type="match status" value="1"/>
</dbReference>
<dbReference type="HAMAP" id="MF_00270">
    <property type="entry name" value="Ribosomal_bS18"/>
    <property type="match status" value="1"/>
</dbReference>
<dbReference type="InterPro" id="IPR001648">
    <property type="entry name" value="Ribosomal_bS18"/>
</dbReference>
<dbReference type="InterPro" id="IPR018275">
    <property type="entry name" value="Ribosomal_bS18_CS"/>
</dbReference>
<dbReference type="InterPro" id="IPR036870">
    <property type="entry name" value="Ribosomal_bS18_sf"/>
</dbReference>
<dbReference type="NCBIfam" id="TIGR00165">
    <property type="entry name" value="S18"/>
    <property type="match status" value="1"/>
</dbReference>
<dbReference type="PANTHER" id="PTHR13479">
    <property type="entry name" value="30S RIBOSOMAL PROTEIN S18"/>
    <property type="match status" value="1"/>
</dbReference>
<dbReference type="PANTHER" id="PTHR13479:SF40">
    <property type="entry name" value="SMALL RIBOSOMAL SUBUNIT PROTEIN BS18M"/>
    <property type="match status" value="1"/>
</dbReference>
<dbReference type="Pfam" id="PF01084">
    <property type="entry name" value="Ribosomal_S18"/>
    <property type="match status" value="1"/>
</dbReference>
<dbReference type="PRINTS" id="PR00974">
    <property type="entry name" value="RIBOSOMALS18"/>
</dbReference>
<dbReference type="SUPFAM" id="SSF46911">
    <property type="entry name" value="Ribosomal protein S18"/>
    <property type="match status" value="1"/>
</dbReference>
<dbReference type="PROSITE" id="PS00057">
    <property type="entry name" value="RIBOSOMAL_S18"/>
    <property type="match status" value="1"/>
</dbReference>
<evidence type="ECO:0000255" key="1">
    <source>
        <dbReference type="HAMAP-Rule" id="MF_00270"/>
    </source>
</evidence>
<evidence type="ECO:0000305" key="2"/>
<protein>
    <recommendedName>
        <fullName evidence="1">Small ribosomal subunit protein bS18</fullName>
    </recommendedName>
    <alternativeName>
        <fullName evidence="2">30S ribosomal protein S18</fullName>
    </alternativeName>
</protein>
<gene>
    <name evidence="1" type="primary">rpsR</name>
    <name type="ordered locus">RPB_2463</name>
</gene>
<reference key="1">
    <citation type="submission" date="2006-01" db="EMBL/GenBank/DDBJ databases">
        <title>Complete sequence of Rhodopseudomonas palustris HaA2.</title>
        <authorList>
            <consortium name="US DOE Joint Genome Institute"/>
            <person name="Copeland A."/>
            <person name="Lucas S."/>
            <person name="Lapidus A."/>
            <person name="Barry K."/>
            <person name="Detter J.C."/>
            <person name="Glavina T."/>
            <person name="Hammon N."/>
            <person name="Israni S."/>
            <person name="Pitluck S."/>
            <person name="Chain P."/>
            <person name="Malfatti S."/>
            <person name="Shin M."/>
            <person name="Vergez L."/>
            <person name="Schmutz J."/>
            <person name="Larimer F."/>
            <person name="Land M."/>
            <person name="Hauser L."/>
            <person name="Pelletier D.A."/>
            <person name="Kyrpides N."/>
            <person name="Anderson I."/>
            <person name="Oda Y."/>
            <person name="Harwood C.S."/>
            <person name="Richardson P."/>
        </authorList>
    </citation>
    <scope>NUCLEOTIDE SEQUENCE [LARGE SCALE GENOMIC DNA]</scope>
    <source>
        <strain>HaA2</strain>
    </source>
</reference>
<organism>
    <name type="scientific">Rhodopseudomonas palustris (strain HaA2)</name>
    <dbReference type="NCBI Taxonomy" id="316058"/>
    <lineage>
        <taxon>Bacteria</taxon>
        <taxon>Pseudomonadati</taxon>
        <taxon>Pseudomonadota</taxon>
        <taxon>Alphaproteobacteria</taxon>
        <taxon>Hyphomicrobiales</taxon>
        <taxon>Nitrobacteraceae</taxon>
        <taxon>Rhodopseudomonas</taxon>
    </lineage>
</organism>